<reference key="1">
    <citation type="journal article" date="2006" name="Nature">
        <title>The DNA sequence and biological annotation of human chromosome 1.</title>
        <authorList>
            <person name="Gregory S.G."/>
            <person name="Barlow K.F."/>
            <person name="McLay K.E."/>
            <person name="Kaul R."/>
            <person name="Swarbreck D."/>
            <person name="Dunham A."/>
            <person name="Scott C.E."/>
            <person name="Howe K.L."/>
            <person name="Woodfine K."/>
            <person name="Spencer C.C.A."/>
            <person name="Jones M.C."/>
            <person name="Gillson C."/>
            <person name="Searle S."/>
            <person name="Zhou Y."/>
            <person name="Kokocinski F."/>
            <person name="McDonald L."/>
            <person name="Evans R."/>
            <person name="Phillips K."/>
            <person name="Atkinson A."/>
            <person name="Cooper R."/>
            <person name="Jones C."/>
            <person name="Hall R.E."/>
            <person name="Andrews T.D."/>
            <person name="Lloyd C."/>
            <person name="Ainscough R."/>
            <person name="Almeida J.P."/>
            <person name="Ambrose K.D."/>
            <person name="Anderson F."/>
            <person name="Andrew R.W."/>
            <person name="Ashwell R.I.S."/>
            <person name="Aubin K."/>
            <person name="Babbage A.K."/>
            <person name="Bagguley C.L."/>
            <person name="Bailey J."/>
            <person name="Beasley H."/>
            <person name="Bethel G."/>
            <person name="Bird C.P."/>
            <person name="Bray-Allen S."/>
            <person name="Brown J.Y."/>
            <person name="Brown A.J."/>
            <person name="Buckley D."/>
            <person name="Burton J."/>
            <person name="Bye J."/>
            <person name="Carder C."/>
            <person name="Chapman J.C."/>
            <person name="Clark S.Y."/>
            <person name="Clarke G."/>
            <person name="Clee C."/>
            <person name="Cobley V."/>
            <person name="Collier R.E."/>
            <person name="Corby N."/>
            <person name="Coville G.J."/>
            <person name="Davies J."/>
            <person name="Deadman R."/>
            <person name="Dunn M."/>
            <person name="Earthrowl M."/>
            <person name="Ellington A.G."/>
            <person name="Errington H."/>
            <person name="Frankish A."/>
            <person name="Frankland J."/>
            <person name="French L."/>
            <person name="Garner P."/>
            <person name="Garnett J."/>
            <person name="Gay L."/>
            <person name="Ghori M.R.J."/>
            <person name="Gibson R."/>
            <person name="Gilby L.M."/>
            <person name="Gillett W."/>
            <person name="Glithero R.J."/>
            <person name="Grafham D.V."/>
            <person name="Griffiths C."/>
            <person name="Griffiths-Jones S."/>
            <person name="Grocock R."/>
            <person name="Hammond S."/>
            <person name="Harrison E.S.I."/>
            <person name="Hart E."/>
            <person name="Haugen E."/>
            <person name="Heath P.D."/>
            <person name="Holmes S."/>
            <person name="Holt K."/>
            <person name="Howden P.J."/>
            <person name="Hunt A.R."/>
            <person name="Hunt S.E."/>
            <person name="Hunter G."/>
            <person name="Isherwood J."/>
            <person name="James R."/>
            <person name="Johnson C."/>
            <person name="Johnson D."/>
            <person name="Joy A."/>
            <person name="Kay M."/>
            <person name="Kershaw J.K."/>
            <person name="Kibukawa M."/>
            <person name="Kimberley A.M."/>
            <person name="King A."/>
            <person name="Knights A.J."/>
            <person name="Lad H."/>
            <person name="Laird G."/>
            <person name="Lawlor S."/>
            <person name="Leongamornlert D.A."/>
            <person name="Lloyd D.M."/>
            <person name="Loveland J."/>
            <person name="Lovell J."/>
            <person name="Lush M.J."/>
            <person name="Lyne R."/>
            <person name="Martin S."/>
            <person name="Mashreghi-Mohammadi M."/>
            <person name="Matthews L."/>
            <person name="Matthews N.S.W."/>
            <person name="McLaren S."/>
            <person name="Milne S."/>
            <person name="Mistry S."/>
            <person name="Moore M.J.F."/>
            <person name="Nickerson T."/>
            <person name="O'Dell C.N."/>
            <person name="Oliver K."/>
            <person name="Palmeiri A."/>
            <person name="Palmer S.A."/>
            <person name="Parker A."/>
            <person name="Patel D."/>
            <person name="Pearce A.V."/>
            <person name="Peck A.I."/>
            <person name="Pelan S."/>
            <person name="Phelps K."/>
            <person name="Phillimore B.J."/>
            <person name="Plumb R."/>
            <person name="Rajan J."/>
            <person name="Raymond C."/>
            <person name="Rouse G."/>
            <person name="Saenphimmachak C."/>
            <person name="Sehra H.K."/>
            <person name="Sheridan E."/>
            <person name="Shownkeen R."/>
            <person name="Sims S."/>
            <person name="Skuce C.D."/>
            <person name="Smith M."/>
            <person name="Steward C."/>
            <person name="Subramanian S."/>
            <person name="Sycamore N."/>
            <person name="Tracey A."/>
            <person name="Tromans A."/>
            <person name="Van Helmond Z."/>
            <person name="Wall M."/>
            <person name="Wallis J.M."/>
            <person name="White S."/>
            <person name="Whitehead S.L."/>
            <person name="Wilkinson J.E."/>
            <person name="Willey D.L."/>
            <person name="Williams H."/>
            <person name="Wilming L."/>
            <person name="Wray P.W."/>
            <person name="Wu Z."/>
            <person name="Coulson A."/>
            <person name="Vaudin M."/>
            <person name="Sulston J.E."/>
            <person name="Durbin R.M."/>
            <person name="Hubbard T."/>
            <person name="Wooster R."/>
            <person name="Dunham I."/>
            <person name="Carter N.P."/>
            <person name="McVean G."/>
            <person name="Ross M.T."/>
            <person name="Harrow J."/>
            <person name="Olson M.V."/>
            <person name="Beck S."/>
            <person name="Rogers J."/>
            <person name="Bentley D.R."/>
        </authorList>
    </citation>
    <scope>NUCLEOTIDE SEQUENCE [LARGE SCALE GENOMIC DNA]</scope>
</reference>
<reference key="2">
    <citation type="journal article" date="2004" name="Nat. Genet.">
        <title>Complete sequencing and characterization of 21,243 full-length human cDNAs.</title>
        <authorList>
            <person name="Ota T."/>
            <person name="Suzuki Y."/>
            <person name="Nishikawa T."/>
            <person name="Otsuki T."/>
            <person name="Sugiyama T."/>
            <person name="Irie R."/>
            <person name="Wakamatsu A."/>
            <person name="Hayashi K."/>
            <person name="Sato H."/>
            <person name="Nagai K."/>
            <person name="Kimura K."/>
            <person name="Makita H."/>
            <person name="Sekine M."/>
            <person name="Obayashi M."/>
            <person name="Nishi T."/>
            <person name="Shibahara T."/>
            <person name="Tanaka T."/>
            <person name="Ishii S."/>
            <person name="Yamamoto J."/>
            <person name="Saito K."/>
            <person name="Kawai Y."/>
            <person name="Isono Y."/>
            <person name="Nakamura Y."/>
            <person name="Nagahari K."/>
            <person name="Murakami K."/>
            <person name="Yasuda T."/>
            <person name="Iwayanagi T."/>
            <person name="Wagatsuma M."/>
            <person name="Shiratori A."/>
            <person name="Sudo H."/>
            <person name="Hosoiri T."/>
            <person name="Kaku Y."/>
            <person name="Kodaira H."/>
            <person name="Kondo H."/>
            <person name="Sugawara M."/>
            <person name="Takahashi M."/>
            <person name="Kanda K."/>
            <person name="Yokoi T."/>
            <person name="Furuya T."/>
            <person name="Kikkawa E."/>
            <person name="Omura Y."/>
            <person name="Abe K."/>
            <person name="Kamihara K."/>
            <person name="Katsuta N."/>
            <person name="Sato K."/>
            <person name="Tanikawa M."/>
            <person name="Yamazaki M."/>
            <person name="Ninomiya K."/>
            <person name="Ishibashi T."/>
            <person name="Yamashita H."/>
            <person name="Murakawa K."/>
            <person name="Fujimori K."/>
            <person name="Tanai H."/>
            <person name="Kimata M."/>
            <person name="Watanabe M."/>
            <person name="Hiraoka S."/>
            <person name="Chiba Y."/>
            <person name="Ishida S."/>
            <person name="Ono Y."/>
            <person name="Takiguchi S."/>
            <person name="Watanabe S."/>
            <person name="Yosida M."/>
            <person name="Hotuta T."/>
            <person name="Kusano J."/>
            <person name="Kanehori K."/>
            <person name="Takahashi-Fujii A."/>
            <person name="Hara H."/>
            <person name="Tanase T.-O."/>
            <person name="Nomura Y."/>
            <person name="Togiya S."/>
            <person name="Komai F."/>
            <person name="Hara R."/>
            <person name="Takeuchi K."/>
            <person name="Arita M."/>
            <person name="Imose N."/>
            <person name="Musashino K."/>
            <person name="Yuuki H."/>
            <person name="Oshima A."/>
            <person name="Sasaki N."/>
            <person name="Aotsuka S."/>
            <person name="Yoshikawa Y."/>
            <person name="Matsunawa H."/>
            <person name="Ichihara T."/>
            <person name="Shiohata N."/>
            <person name="Sano S."/>
            <person name="Moriya S."/>
            <person name="Momiyama H."/>
            <person name="Satoh N."/>
            <person name="Takami S."/>
            <person name="Terashima Y."/>
            <person name="Suzuki O."/>
            <person name="Nakagawa S."/>
            <person name="Senoh A."/>
            <person name="Mizoguchi H."/>
            <person name="Goto Y."/>
            <person name="Shimizu F."/>
            <person name="Wakebe H."/>
            <person name="Hishigaki H."/>
            <person name="Watanabe T."/>
            <person name="Sugiyama A."/>
            <person name="Takemoto M."/>
            <person name="Kawakami B."/>
            <person name="Yamazaki M."/>
            <person name="Watanabe K."/>
            <person name="Kumagai A."/>
            <person name="Itakura S."/>
            <person name="Fukuzumi Y."/>
            <person name="Fujimori Y."/>
            <person name="Komiyama M."/>
            <person name="Tashiro H."/>
            <person name="Tanigami A."/>
            <person name="Fujiwara T."/>
            <person name="Ono T."/>
            <person name="Yamada K."/>
            <person name="Fujii Y."/>
            <person name="Ozaki K."/>
            <person name="Hirao M."/>
            <person name="Ohmori Y."/>
            <person name="Kawabata A."/>
            <person name="Hikiji T."/>
            <person name="Kobatake N."/>
            <person name="Inagaki H."/>
            <person name="Ikema Y."/>
            <person name="Okamoto S."/>
            <person name="Okitani R."/>
            <person name="Kawakami T."/>
            <person name="Noguchi S."/>
            <person name="Itoh T."/>
            <person name="Shigeta K."/>
            <person name="Senba T."/>
            <person name="Matsumura K."/>
            <person name="Nakajima Y."/>
            <person name="Mizuno T."/>
            <person name="Morinaga M."/>
            <person name="Sasaki M."/>
            <person name="Togashi T."/>
            <person name="Oyama M."/>
            <person name="Hata H."/>
            <person name="Watanabe M."/>
            <person name="Komatsu T."/>
            <person name="Mizushima-Sugano J."/>
            <person name="Satoh T."/>
            <person name="Shirai Y."/>
            <person name="Takahashi Y."/>
            <person name="Nakagawa K."/>
            <person name="Okumura K."/>
            <person name="Nagase T."/>
            <person name="Nomura N."/>
            <person name="Kikuchi H."/>
            <person name="Masuho Y."/>
            <person name="Yamashita R."/>
            <person name="Nakai K."/>
            <person name="Yada T."/>
            <person name="Nakamura Y."/>
            <person name="Ohara O."/>
            <person name="Isogai T."/>
            <person name="Sugano S."/>
        </authorList>
    </citation>
    <scope>NUCLEOTIDE SEQUENCE [LARGE SCALE MRNA] OF 29-124 (ISOFORM 2)</scope>
    <source>
        <tissue>Brain</tissue>
    </source>
</reference>
<gene>
    <name type="primary">KNCN</name>
</gene>
<accession>A6PVL3</accession>
<accession>A8MXE3</accession>
<protein>
    <recommendedName>
        <fullName>Kinocilin</fullName>
    </recommendedName>
</protein>
<proteinExistence type="evidence at transcript level"/>
<evidence type="ECO:0000250" key="1"/>
<evidence type="ECO:0000255" key="2"/>
<evidence type="ECO:0000256" key="3">
    <source>
        <dbReference type="SAM" id="MobiDB-lite"/>
    </source>
</evidence>
<evidence type="ECO:0000303" key="4">
    <source>
    </source>
</evidence>
<evidence type="ECO:0000305" key="5"/>
<name>KNCN_HUMAN</name>
<dbReference type="EMBL" id="AL136373">
    <property type="status" value="NOT_ANNOTATED_CDS"/>
    <property type="molecule type" value="Genomic_DNA"/>
</dbReference>
<dbReference type="EMBL" id="DA208279">
    <property type="status" value="NOT_ANNOTATED_CDS"/>
    <property type="molecule type" value="mRNA"/>
</dbReference>
<dbReference type="CCDS" id="CCDS44133.1">
    <molecule id="A6PVL3-2"/>
</dbReference>
<dbReference type="CCDS" id="CCDS81316.1">
    <molecule id="A6PVL3-1"/>
</dbReference>
<dbReference type="RefSeq" id="NP_001091080.1">
    <molecule id="A6PVL3-2"/>
    <property type="nucleotide sequence ID" value="NM_001097611.1"/>
</dbReference>
<dbReference type="RefSeq" id="NP_001309184.1">
    <molecule id="A6PVL3-1"/>
    <property type="nucleotide sequence ID" value="NM_001322255.2"/>
</dbReference>
<dbReference type="STRING" id="9606.ENSP00000419705"/>
<dbReference type="iPTMnet" id="A6PVL3"/>
<dbReference type="PhosphoSitePlus" id="A6PVL3"/>
<dbReference type="BioMuta" id="KNCN"/>
<dbReference type="PeptideAtlas" id="A6PVL3"/>
<dbReference type="Antibodypedia" id="51691">
    <property type="antibodies" value="9 antibodies from 7 providers"/>
</dbReference>
<dbReference type="DNASU" id="148930"/>
<dbReference type="Ensembl" id="ENST00000396314.3">
    <molecule id="A6PVL3-2"/>
    <property type="protein sequence ID" value="ENSP00000379607.3"/>
    <property type="gene ID" value="ENSG00000162456.10"/>
</dbReference>
<dbReference type="Ensembl" id="ENST00000481882.7">
    <molecule id="A6PVL3-1"/>
    <property type="protein sequence ID" value="ENSP00000419705.3"/>
    <property type="gene ID" value="ENSG00000162456.10"/>
</dbReference>
<dbReference type="GeneID" id="148930"/>
<dbReference type="KEGG" id="hsa:148930"/>
<dbReference type="MANE-Select" id="ENST00000481882.7">
    <property type="protein sequence ID" value="ENSP00000419705.3"/>
    <property type="RefSeq nucleotide sequence ID" value="NM_001322255.2"/>
    <property type="RefSeq protein sequence ID" value="NP_001309184.1"/>
</dbReference>
<dbReference type="UCSC" id="uc009vyh.2">
    <molecule id="A6PVL3-1"/>
    <property type="organism name" value="human"/>
</dbReference>
<dbReference type="AGR" id="HGNC:26488"/>
<dbReference type="CTD" id="148930"/>
<dbReference type="DisGeNET" id="148930"/>
<dbReference type="GeneCards" id="KNCN"/>
<dbReference type="HGNC" id="HGNC:26488">
    <property type="gene designation" value="KNCN"/>
</dbReference>
<dbReference type="HPA" id="ENSG00000162456">
    <property type="expression patterns" value="Not detected"/>
</dbReference>
<dbReference type="MIM" id="611455">
    <property type="type" value="gene"/>
</dbReference>
<dbReference type="neXtProt" id="NX_A6PVL3"/>
<dbReference type="VEuPathDB" id="HostDB:ENSG00000162456"/>
<dbReference type="GeneTree" id="ENSGT00400000024146"/>
<dbReference type="HOGENOM" id="CLU_2090155_0_0_1"/>
<dbReference type="InParanoid" id="A6PVL3"/>
<dbReference type="OMA" id="RIHPNPG"/>
<dbReference type="OrthoDB" id="8900302at2759"/>
<dbReference type="PAN-GO" id="A6PVL3">
    <property type="GO annotations" value="5 GO annotations based on evolutionary models"/>
</dbReference>
<dbReference type="PhylomeDB" id="A6PVL3"/>
<dbReference type="TreeFam" id="TF354182"/>
<dbReference type="PathwayCommons" id="A6PVL3"/>
<dbReference type="BioGRID-ORCS" id="148930">
    <property type="hits" value="10 hits in 1138 CRISPR screens"/>
</dbReference>
<dbReference type="GenomeRNAi" id="148930"/>
<dbReference type="Pharos" id="A6PVL3">
    <property type="development level" value="Tdark"/>
</dbReference>
<dbReference type="PRO" id="PR:A6PVL3"/>
<dbReference type="Proteomes" id="UP000005640">
    <property type="component" value="Chromosome 1"/>
</dbReference>
<dbReference type="RNAct" id="A6PVL3">
    <property type="molecule type" value="protein"/>
</dbReference>
<dbReference type="Bgee" id="ENSG00000162456">
    <property type="expression patterns" value="Expressed in primordial germ cell in gonad and 35 other cell types or tissues"/>
</dbReference>
<dbReference type="GO" id="GO:0016324">
    <property type="term" value="C:apical plasma membrane"/>
    <property type="evidence" value="ECO:0000318"/>
    <property type="project" value="GO_Central"/>
</dbReference>
<dbReference type="GO" id="GO:0036064">
    <property type="term" value="C:ciliary basal body"/>
    <property type="evidence" value="ECO:0000318"/>
    <property type="project" value="GO_Central"/>
</dbReference>
<dbReference type="GO" id="GO:0032437">
    <property type="term" value="C:cuticular plate"/>
    <property type="evidence" value="ECO:0000318"/>
    <property type="project" value="GO_Central"/>
</dbReference>
<dbReference type="GO" id="GO:0060091">
    <property type="term" value="C:kinocilium"/>
    <property type="evidence" value="ECO:0000318"/>
    <property type="project" value="GO_Central"/>
</dbReference>
<dbReference type="GO" id="GO:0043025">
    <property type="term" value="C:neuronal cell body"/>
    <property type="evidence" value="ECO:0000318"/>
    <property type="project" value="GO_Central"/>
</dbReference>
<dbReference type="InterPro" id="IPR027837">
    <property type="entry name" value="Kinocilin"/>
</dbReference>
<dbReference type="PANTHER" id="PTHR38497">
    <property type="entry name" value="KINOCILIN"/>
    <property type="match status" value="1"/>
</dbReference>
<dbReference type="PANTHER" id="PTHR38497:SF1">
    <property type="entry name" value="KINOCILIN"/>
    <property type="match status" value="1"/>
</dbReference>
<dbReference type="Pfam" id="PF15033">
    <property type="entry name" value="Kinocilin"/>
    <property type="match status" value="1"/>
</dbReference>
<feature type="chain" id="PRO_0000311265" description="Kinocilin">
    <location>
        <begin position="1"/>
        <end position="124"/>
    </location>
</feature>
<feature type="transmembrane region" description="Helical" evidence="2">
    <location>
        <begin position="13"/>
        <end position="33"/>
    </location>
</feature>
<feature type="transmembrane region" description="Helical" evidence="2">
    <location>
        <begin position="40"/>
        <end position="60"/>
    </location>
</feature>
<feature type="region of interest" description="Disordered" evidence="3">
    <location>
        <begin position="80"/>
        <end position="124"/>
    </location>
</feature>
<feature type="compositionally biased region" description="Polar residues" evidence="3">
    <location>
        <begin position="90"/>
        <end position="109"/>
    </location>
</feature>
<feature type="compositionally biased region" description="Basic and acidic residues" evidence="3">
    <location>
        <begin position="110"/>
        <end position="124"/>
    </location>
</feature>
<feature type="splice variant" id="VSP_040405" description="In isoform 2." evidence="4">
    <location>
        <begin position="51"/>
        <end position="73"/>
    </location>
</feature>
<keyword id="KW-0025">Alternative splicing</keyword>
<keyword id="KW-0472">Membrane</keyword>
<keyword id="KW-1185">Reference proteome</keyword>
<keyword id="KW-0812">Transmembrane</keyword>
<keyword id="KW-1133">Transmembrane helix</keyword>
<sequence>MDIPISSRDFRGLQLACVALGLVAGSIIIGISVSKAAAAMGGVFIGAAVLGLLILAYPFLKARFNLDHILPTIGSLRIHPHPGADHGEGRSSTNGNKEGARSSLSTVSRTLEKLKPGTRGAEEC</sequence>
<comment type="function">
    <text evidence="1">May play a role in stabilizing dense microtubular networks or in vesicular trafficking.</text>
</comment>
<comment type="subcellular location">
    <subcellularLocation>
        <location evidence="5">Membrane</location>
        <topology evidence="5">Multi-pass membrane protein</topology>
    </subcellularLocation>
</comment>
<comment type="alternative products">
    <event type="alternative splicing"/>
    <isoform>
        <id>A6PVL3-1</id>
        <name>1</name>
        <sequence type="displayed"/>
    </isoform>
    <isoform>
        <id>A6PVL3-2</id>
        <name>2</name>
        <sequence type="described" ref="VSP_040405"/>
    </isoform>
</comment>
<organism>
    <name type="scientific">Homo sapiens</name>
    <name type="common">Human</name>
    <dbReference type="NCBI Taxonomy" id="9606"/>
    <lineage>
        <taxon>Eukaryota</taxon>
        <taxon>Metazoa</taxon>
        <taxon>Chordata</taxon>
        <taxon>Craniata</taxon>
        <taxon>Vertebrata</taxon>
        <taxon>Euteleostomi</taxon>
        <taxon>Mammalia</taxon>
        <taxon>Eutheria</taxon>
        <taxon>Euarchontoglires</taxon>
        <taxon>Primates</taxon>
        <taxon>Haplorrhini</taxon>
        <taxon>Catarrhini</taxon>
        <taxon>Hominidae</taxon>
        <taxon>Homo</taxon>
    </lineage>
</organism>